<proteinExistence type="evidence at protein level"/>
<accession>P32775</accession>
<accession>D3DLN8</accession>
<comment type="function">
    <text evidence="1">Glycogen-branching enzyme participates in the glycogen biosynthetic process along with glycogenin and glycogen synthase. Generates alpha-1,6-glucosidic branches from alpha-1,4-linked glucose chains, to increase solubility of the glycogen polymer.</text>
</comment>
<comment type="catalytic activity">
    <reaction evidence="1">
        <text>Transfers a segment of a (1-&gt;4)-alpha-D-glucan chain to a primary hydroxy group in a similar glucan chain.</text>
        <dbReference type="EC" id="2.4.1.18"/>
    </reaction>
</comment>
<comment type="pathway">
    <text evidence="1">Glycan biosynthesis; glycogen biosynthesis.</text>
</comment>
<comment type="subcellular location">
    <subcellularLocation>
        <location evidence="4">Cytoplasm</location>
    </subcellularLocation>
    <text evidence="6">Localizes to glycogen granules in the cytoplasm.</text>
</comment>
<comment type="developmental stage">
    <text>Expressed during the transition between the late exponential and stationary growth phases, coincident with maximal glycogen accumulation.</text>
</comment>
<comment type="miscellaneous">
    <text evidence="3">Present with 1230 molecules/cell in log phase SD medium.</text>
</comment>
<comment type="similarity">
    <text evidence="5">Belongs to the glycosyl hydrolase 13 family. GlgB subfamily.</text>
</comment>
<reference key="1">
    <citation type="journal article" date="1992" name="J. Biol. Chem.">
        <title>Coordinate regulation of glycogen metabolism in the yeast Saccharomyces cerevisiae. Induction of glycogen branching enzyme.</title>
        <authorList>
            <person name="Thon V.J."/>
            <person name="Vigneron-Lesens C."/>
            <person name="Marianne-Pepin T."/>
            <person name="Montreuil J."/>
            <person name="Decq A."/>
            <person name="Rachez C."/>
            <person name="Ball S.G."/>
            <person name="Cannon J.F."/>
        </authorList>
    </citation>
    <scope>NUCLEOTIDE SEQUENCE [GENOMIC DNA]</scope>
</reference>
<reference key="2">
    <citation type="journal article" date="1997" name="Nature">
        <title>The nucleotide sequence of Saccharomyces cerevisiae chromosome V.</title>
        <authorList>
            <person name="Dietrich F.S."/>
            <person name="Mulligan J.T."/>
            <person name="Hennessy K.M."/>
            <person name="Yelton M.A."/>
            <person name="Allen E."/>
            <person name="Araujo R."/>
            <person name="Aviles E."/>
            <person name="Berno A."/>
            <person name="Brennan T."/>
            <person name="Carpenter J."/>
            <person name="Chen E."/>
            <person name="Cherry J.M."/>
            <person name="Chung E."/>
            <person name="Duncan M."/>
            <person name="Guzman E."/>
            <person name="Hartzell G."/>
            <person name="Hunicke-Smith S."/>
            <person name="Hyman R.W."/>
            <person name="Kayser A."/>
            <person name="Komp C."/>
            <person name="Lashkari D."/>
            <person name="Lew H."/>
            <person name="Lin D."/>
            <person name="Mosedale D."/>
            <person name="Nakahara K."/>
            <person name="Namath A."/>
            <person name="Norgren R."/>
            <person name="Oefner P."/>
            <person name="Oh C."/>
            <person name="Petel F.X."/>
            <person name="Roberts D."/>
            <person name="Sehl P."/>
            <person name="Schramm S."/>
            <person name="Shogren T."/>
            <person name="Smith V."/>
            <person name="Taylor P."/>
            <person name="Wei Y."/>
            <person name="Botstein D."/>
            <person name="Davis R.W."/>
        </authorList>
    </citation>
    <scope>NUCLEOTIDE SEQUENCE [LARGE SCALE GENOMIC DNA]</scope>
    <source>
        <strain>ATCC 204508 / S288c</strain>
    </source>
</reference>
<reference key="3">
    <citation type="journal article" date="2014" name="G3 (Bethesda)">
        <title>The reference genome sequence of Saccharomyces cerevisiae: Then and now.</title>
        <authorList>
            <person name="Engel S.R."/>
            <person name="Dietrich F.S."/>
            <person name="Fisk D.G."/>
            <person name="Binkley G."/>
            <person name="Balakrishnan R."/>
            <person name="Costanzo M.C."/>
            <person name="Dwight S.S."/>
            <person name="Hitz B.C."/>
            <person name="Karra K."/>
            <person name="Nash R.S."/>
            <person name="Weng S."/>
            <person name="Wong E.D."/>
            <person name="Lloyd P."/>
            <person name="Skrzypek M.S."/>
            <person name="Miyasato S.R."/>
            <person name="Simison M."/>
            <person name="Cherry J.M."/>
        </authorList>
    </citation>
    <scope>GENOME REANNOTATION</scope>
    <source>
        <strain>ATCC 204508 / S288c</strain>
    </source>
</reference>
<reference key="4">
    <citation type="journal article" date="2003" name="Nature">
        <title>Global analysis of protein expression in yeast.</title>
        <authorList>
            <person name="Ghaemmaghami S."/>
            <person name="Huh W.-K."/>
            <person name="Bower K."/>
            <person name="Howson R.W."/>
            <person name="Belle A."/>
            <person name="Dephoure N."/>
            <person name="O'Shea E.K."/>
            <person name="Weissman J.S."/>
        </authorList>
    </citation>
    <scope>LEVEL OF PROTEIN EXPRESSION [LARGE SCALE ANALYSIS]</scope>
</reference>
<reference key="5">
    <citation type="journal article" date="2008" name="Mol. Cell. Proteomics">
        <title>A multidimensional chromatography technology for in-depth phosphoproteome analysis.</title>
        <authorList>
            <person name="Albuquerque C.P."/>
            <person name="Smolka M.B."/>
            <person name="Payne S.H."/>
            <person name="Bafna V."/>
            <person name="Eng J."/>
            <person name="Zhou H."/>
        </authorList>
    </citation>
    <scope>PHOSPHORYLATION [LARGE SCALE ANALYSIS] AT SER-190</scope>
    <scope>IDENTIFICATION BY MASS SPECTROMETRY [LARGE SCALE ANALYSIS]</scope>
</reference>
<reference key="6">
    <citation type="journal article" date="2024" name="IScience">
        <title>Atg45 is an autophagy receptor for glycogen, a non-preferred cargo of bulk autophagy in yeast.</title>
        <authorList>
            <person name="Isoda T."/>
            <person name="Takeda E."/>
            <person name="Hosokawa S."/>
            <person name="Hotta-Ren S."/>
            <person name="Ohsumi Y."/>
        </authorList>
    </citation>
    <scope>SUBCELLULAR LOCATION</scope>
</reference>
<protein>
    <recommendedName>
        <fullName>1,4-alpha-glucan-branching enzyme</fullName>
        <ecNumber evidence="1">2.4.1.18</ecNumber>
    </recommendedName>
    <alternativeName>
        <fullName>Glycogen-branching enzyme</fullName>
    </alternativeName>
</protein>
<dbReference type="EC" id="2.4.1.18" evidence="1"/>
<dbReference type="EMBL" id="M76739">
    <property type="protein sequence ID" value="AAA34632.1"/>
    <property type="molecule type" value="Genomic_DNA"/>
</dbReference>
<dbReference type="EMBL" id="U18530">
    <property type="protein sequence ID" value="AAB64488.1"/>
    <property type="molecule type" value="Genomic_DNA"/>
</dbReference>
<dbReference type="EMBL" id="BK006939">
    <property type="protein sequence ID" value="DAA07642.1"/>
    <property type="molecule type" value="Genomic_DNA"/>
</dbReference>
<dbReference type="PIR" id="S50448">
    <property type="entry name" value="S50448"/>
</dbReference>
<dbReference type="RefSeq" id="NP_010905.1">
    <property type="nucleotide sequence ID" value="NM_001178826.1"/>
</dbReference>
<dbReference type="SMR" id="P32775"/>
<dbReference type="BioGRID" id="36720">
    <property type="interactions" value="28"/>
</dbReference>
<dbReference type="DIP" id="DIP-3873N"/>
<dbReference type="FunCoup" id="P32775">
    <property type="interactions" value="609"/>
</dbReference>
<dbReference type="IntAct" id="P32775">
    <property type="interactions" value="14"/>
</dbReference>
<dbReference type="MINT" id="P32775"/>
<dbReference type="STRING" id="4932.YEL011W"/>
<dbReference type="CAZy" id="CBM48">
    <property type="family name" value="Carbohydrate-Binding Module Family 48"/>
</dbReference>
<dbReference type="CAZy" id="GH13">
    <property type="family name" value="Glycoside Hydrolase Family 13"/>
</dbReference>
<dbReference type="iPTMnet" id="P32775"/>
<dbReference type="PaxDb" id="4932-YEL011W"/>
<dbReference type="PeptideAtlas" id="P32775"/>
<dbReference type="EnsemblFungi" id="YEL011W_mRNA">
    <property type="protein sequence ID" value="YEL011W"/>
    <property type="gene ID" value="YEL011W"/>
</dbReference>
<dbReference type="GeneID" id="856705"/>
<dbReference type="KEGG" id="sce:YEL011W"/>
<dbReference type="AGR" id="SGD:S000000737"/>
<dbReference type="SGD" id="S000000737">
    <property type="gene designation" value="GLC3"/>
</dbReference>
<dbReference type="VEuPathDB" id="FungiDB:YEL011W"/>
<dbReference type="eggNOG" id="KOG0470">
    <property type="taxonomic scope" value="Eukaryota"/>
</dbReference>
<dbReference type="GeneTree" id="ENSGT00390000017040"/>
<dbReference type="HOGENOM" id="CLU_011131_2_2_1"/>
<dbReference type="InParanoid" id="P32775"/>
<dbReference type="OMA" id="YEMHLGS"/>
<dbReference type="OrthoDB" id="196493at2759"/>
<dbReference type="BioCyc" id="YEAST:YEL011W-MONOMER"/>
<dbReference type="Reactome" id="R-SCE-3322077">
    <property type="pathway name" value="Glycogen synthesis"/>
</dbReference>
<dbReference type="UniPathway" id="UPA00164"/>
<dbReference type="BioGRID-ORCS" id="856705">
    <property type="hits" value="0 hits in 10 CRISPR screens"/>
</dbReference>
<dbReference type="PRO" id="PR:P32775"/>
<dbReference type="Proteomes" id="UP000002311">
    <property type="component" value="Chromosome V"/>
</dbReference>
<dbReference type="RNAct" id="P32775">
    <property type="molecule type" value="protein"/>
</dbReference>
<dbReference type="GO" id="GO:0005737">
    <property type="term" value="C:cytoplasm"/>
    <property type="evidence" value="ECO:0000314"/>
    <property type="project" value="UniProtKB"/>
</dbReference>
<dbReference type="GO" id="GO:0003844">
    <property type="term" value="F:1,4-alpha-glucan branching enzyme activity"/>
    <property type="evidence" value="ECO:0000315"/>
    <property type="project" value="SGD"/>
</dbReference>
<dbReference type="GO" id="GO:0043169">
    <property type="term" value="F:cation binding"/>
    <property type="evidence" value="ECO:0007669"/>
    <property type="project" value="InterPro"/>
</dbReference>
<dbReference type="GO" id="GO:0004553">
    <property type="term" value="F:hydrolase activity, hydrolyzing O-glycosyl compounds"/>
    <property type="evidence" value="ECO:0007669"/>
    <property type="project" value="InterPro"/>
</dbReference>
<dbReference type="GO" id="GO:0005978">
    <property type="term" value="P:glycogen biosynthetic process"/>
    <property type="evidence" value="ECO:0000315"/>
    <property type="project" value="SGD"/>
</dbReference>
<dbReference type="CDD" id="cd11321">
    <property type="entry name" value="AmyAc_bac_euk_BE"/>
    <property type="match status" value="1"/>
</dbReference>
<dbReference type="CDD" id="cd02854">
    <property type="entry name" value="E_set_GBE_euk_N"/>
    <property type="match status" value="1"/>
</dbReference>
<dbReference type="FunFam" id="3.20.20.80:FF:000001">
    <property type="entry name" value="1,4-alpha-glucan branching enzyme"/>
    <property type="match status" value="1"/>
</dbReference>
<dbReference type="FunFam" id="2.60.40.10:FF:001874">
    <property type="entry name" value="1,4-alpha-glucan-branching enzyme"/>
    <property type="match status" value="1"/>
</dbReference>
<dbReference type="FunFam" id="2.60.40.1180:FF:000003">
    <property type="entry name" value="1,4-alpha-glucan-branching enzyme, chloroplastic/amyloplastic"/>
    <property type="match status" value="1"/>
</dbReference>
<dbReference type="Gene3D" id="3.20.20.80">
    <property type="entry name" value="Glycosidases"/>
    <property type="match status" value="1"/>
</dbReference>
<dbReference type="Gene3D" id="2.60.40.1180">
    <property type="entry name" value="Golgi alpha-mannosidase II"/>
    <property type="match status" value="1"/>
</dbReference>
<dbReference type="Gene3D" id="2.60.40.10">
    <property type="entry name" value="Immunoglobulins"/>
    <property type="match status" value="1"/>
</dbReference>
<dbReference type="InterPro" id="IPR006048">
    <property type="entry name" value="A-amylase/branching_C"/>
</dbReference>
<dbReference type="InterPro" id="IPR037439">
    <property type="entry name" value="Branching_enzy"/>
</dbReference>
<dbReference type="InterPro" id="IPR006047">
    <property type="entry name" value="Glyco_hydro_13_cat_dom"/>
</dbReference>
<dbReference type="InterPro" id="IPR004193">
    <property type="entry name" value="Glyco_hydro_13_N"/>
</dbReference>
<dbReference type="InterPro" id="IPR013780">
    <property type="entry name" value="Glyco_hydro_b"/>
</dbReference>
<dbReference type="InterPro" id="IPR017853">
    <property type="entry name" value="Glycoside_hydrolase_SF"/>
</dbReference>
<dbReference type="InterPro" id="IPR013783">
    <property type="entry name" value="Ig-like_fold"/>
</dbReference>
<dbReference type="InterPro" id="IPR014756">
    <property type="entry name" value="Ig_E-set"/>
</dbReference>
<dbReference type="PANTHER" id="PTHR43651">
    <property type="entry name" value="1,4-ALPHA-GLUCAN-BRANCHING ENZYME"/>
    <property type="match status" value="1"/>
</dbReference>
<dbReference type="PANTHER" id="PTHR43651:SF3">
    <property type="entry name" value="1,4-ALPHA-GLUCAN-BRANCHING ENZYME"/>
    <property type="match status" value="1"/>
</dbReference>
<dbReference type="Pfam" id="PF00128">
    <property type="entry name" value="Alpha-amylase"/>
    <property type="match status" value="1"/>
</dbReference>
<dbReference type="Pfam" id="PF02806">
    <property type="entry name" value="Alpha-amylase_C"/>
    <property type="match status" value="1"/>
</dbReference>
<dbReference type="Pfam" id="PF02922">
    <property type="entry name" value="CBM_48"/>
    <property type="match status" value="1"/>
</dbReference>
<dbReference type="PIRSF" id="PIRSF000463">
    <property type="entry name" value="GlgB"/>
    <property type="match status" value="1"/>
</dbReference>
<dbReference type="SMART" id="SM00642">
    <property type="entry name" value="Aamy"/>
    <property type="match status" value="1"/>
</dbReference>
<dbReference type="SUPFAM" id="SSF51445">
    <property type="entry name" value="(Trans)glycosidases"/>
    <property type="match status" value="1"/>
</dbReference>
<dbReference type="SUPFAM" id="SSF81296">
    <property type="entry name" value="E set domains"/>
    <property type="match status" value="1"/>
</dbReference>
<dbReference type="SUPFAM" id="SSF51011">
    <property type="entry name" value="Glycosyl hydrolase domain"/>
    <property type="match status" value="1"/>
</dbReference>
<keyword id="KW-0963">Cytoplasm</keyword>
<keyword id="KW-0320">Glycogen biosynthesis</keyword>
<keyword id="KW-0328">Glycosyltransferase</keyword>
<keyword id="KW-0597">Phosphoprotein</keyword>
<keyword id="KW-1185">Reference proteome</keyword>
<keyword id="KW-0808">Transferase</keyword>
<feature type="chain" id="PRO_0000188786" description="1,4-alpha-glucan-branching enzyme">
    <location>
        <begin position="1"/>
        <end position="704"/>
    </location>
</feature>
<feature type="active site" description="Nucleophile" evidence="1">
    <location>
        <position position="356"/>
    </location>
</feature>
<feature type="active site" description="Proton donor" evidence="1">
    <location>
        <position position="417"/>
    </location>
</feature>
<feature type="binding site" evidence="2">
    <location>
        <position position="94"/>
    </location>
    <ligand>
        <name>(1,4-alpha-D-glucosyl)n</name>
        <dbReference type="ChEBI" id="CHEBI:15444"/>
    </ligand>
</feature>
<feature type="binding site" evidence="2">
    <location>
        <position position="131"/>
    </location>
    <ligand>
        <name>(1,4-alpha-D-glucosyl)n</name>
        <dbReference type="ChEBI" id="CHEBI:15444"/>
    </ligand>
</feature>
<feature type="site" description="Transition state stabilizer" evidence="1">
    <location>
        <position position="486"/>
    </location>
</feature>
<feature type="modified residue" description="Phosphoserine" evidence="7">
    <location>
        <position position="190"/>
    </location>
</feature>
<feature type="sequence conflict" description="In Ref. 1; AAA34632." evidence="5" ref="1">
    <original>S</original>
    <variation>T</variation>
    <location>
        <position position="564"/>
    </location>
</feature>
<gene>
    <name type="primary">GLC3</name>
    <name type="ordered locus">YEL011W</name>
</gene>
<evidence type="ECO:0000250" key="1">
    <source>
        <dbReference type="UniProtKB" id="Q04446"/>
    </source>
</evidence>
<evidence type="ECO:0000250" key="2">
    <source>
        <dbReference type="UniProtKB" id="Q6FJV0"/>
    </source>
</evidence>
<evidence type="ECO:0000269" key="3">
    <source>
    </source>
</evidence>
<evidence type="ECO:0000269" key="4">
    <source>
    </source>
</evidence>
<evidence type="ECO:0000305" key="5"/>
<evidence type="ECO:0000305" key="6">
    <source>
    </source>
</evidence>
<evidence type="ECO:0007744" key="7">
    <source>
    </source>
</evidence>
<organism>
    <name type="scientific">Saccharomyces cerevisiae (strain ATCC 204508 / S288c)</name>
    <name type="common">Baker's yeast</name>
    <dbReference type="NCBI Taxonomy" id="559292"/>
    <lineage>
        <taxon>Eukaryota</taxon>
        <taxon>Fungi</taxon>
        <taxon>Dikarya</taxon>
        <taxon>Ascomycota</taxon>
        <taxon>Saccharomycotina</taxon>
        <taxon>Saccharomycetes</taxon>
        <taxon>Saccharomycetales</taxon>
        <taxon>Saccharomycetaceae</taxon>
        <taxon>Saccharomyces</taxon>
    </lineage>
</organism>
<name>GLGB_YEAST</name>
<sequence length="704" mass="81116">MYNIPDNVKGAVEFDPWLKPFADVLSERRYLADKWLYDITHATPDGSYQSLSKFARDSYKSYGLHANPETKEITYKEWAPNAERAFLVGDFNNWDTTSHELKNKDEFGNFTITLHPLPNGDFAIPHDSKIKVMFILPDGSKIFRLPAWITRATQPSKETSKQFGPAYEGRFWNPENPYKFVHPRPKFSESVDSLRIYEAHVGISSPEPKITTYKEFTEKVLPRIKYLGYDAIQLMAIMEHAYYASFGYQVTNFFAASSRFGTPEELKELIDTAHSMGILVLLDVVHSHASKNVEDGLNMFDGSDHQYFHSISSGRGEHPLWDSRLFNYGKFEVQRFLLANLAFYVDVYQFDGFRFDGVTSMLYVHHGVGAGGSFSGDYNEYLSRDRSFVDHEALAYLMLANDLVHEMLPNLAVTVAEDVSGYPTLCLPRSIGGTGFDYRLAMALPDMWIKLIKEKKDDEWEMGSIVYTLTNRRYGEKVVAYCESHDQALVGDKTLAFWLMDAAMYTDMTVLKEPSIVIDRGIALHKMIRLITHSLGGEAYLNFEGNEFGHPEWLDFPNVNNGDSYKYARRQFNLADDPLLRYQNLNEFDRSMQLCEKRHKWLNTKQAYVSLKHEGDKMIVFERNNLLFIFNFHPTNSYSDYRVGVEKAGTYHIVLNSDRAEFGGHNRINESSEFFTTDLEWNNRKNFLQVYIPSRVALVLALKE</sequence>